<gene>
    <name type="primary">TOM9-2</name>
    <name type="synonym">TOM22-2</name>
    <name type="ordered locus">At5g43970</name>
    <name type="ORF">MRH10.8</name>
</gene>
<accession>Q9FNC9</accession>
<sequence>MAAKRIGAGKSGGGDPNILARISNSEIVSQGRRAAGDAVEVSKKLLRSTGKAAWIAGTTFLILVVPLIIEMDREAQINEIELQQASLLGAPPSPMQRGL</sequence>
<evidence type="ECO:0000250" key="1">
    <source>
        <dbReference type="UniProtKB" id="P49334"/>
    </source>
</evidence>
<evidence type="ECO:0000255" key="2"/>
<evidence type="ECO:0000269" key="3">
    <source>
    </source>
</evidence>
<evidence type="ECO:0000269" key="4">
    <source ref="5"/>
</evidence>
<evidence type="ECO:0000269" key="5">
    <source ref="6"/>
</evidence>
<evidence type="ECO:0000305" key="6"/>
<evidence type="ECO:0000312" key="7">
    <source>
        <dbReference type="EMBL" id="AAK97740.1"/>
    </source>
</evidence>
<evidence type="ECO:0000312" key="8">
    <source>
        <dbReference type="EMBL" id="BAB09057.1"/>
    </source>
</evidence>
<organism evidence="8">
    <name type="scientific">Arabidopsis thaliana</name>
    <name type="common">Mouse-ear cress</name>
    <dbReference type="NCBI Taxonomy" id="3702"/>
    <lineage>
        <taxon>Eukaryota</taxon>
        <taxon>Viridiplantae</taxon>
        <taxon>Streptophyta</taxon>
        <taxon>Embryophyta</taxon>
        <taxon>Tracheophyta</taxon>
        <taxon>Spermatophyta</taxon>
        <taxon>Magnoliopsida</taxon>
        <taxon>eudicotyledons</taxon>
        <taxon>Gunneridae</taxon>
        <taxon>Pentapetalae</taxon>
        <taxon>rosids</taxon>
        <taxon>malvids</taxon>
        <taxon>Brassicales</taxon>
        <taxon>Brassicaceae</taxon>
        <taxon>Camelineae</taxon>
        <taxon>Arabidopsis</taxon>
    </lineage>
</organism>
<proteinExistence type="evidence at protein level"/>
<dbReference type="EMBL" id="AB006703">
    <property type="protein sequence ID" value="BAB09057.1"/>
    <property type="molecule type" value="Genomic_DNA"/>
</dbReference>
<dbReference type="EMBL" id="CP002688">
    <property type="protein sequence ID" value="AED95039.1"/>
    <property type="molecule type" value="Genomic_DNA"/>
</dbReference>
<dbReference type="EMBL" id="AY052270">
    <property type="protein sequence ID" value="AAK97740.1"/>
    <property type="molecule type" value="mRNA"/>
</dbReference>
<dbReference type="EMBL" id="AY060520">
    <property type="protein sequence ID" value="AAL31133.1"/>
    <property type="molecule type" value="mRNA"/>
</dbReference>
<dbReference type="EMBL" id="AY088551">
    <property type="protein sequence ID" value="AAM66083.1"/>
    <property type="molecule type" value="mRNA"/>
</dbReference>
<dbReference type="RefSeq" id="NP_199210.1">
    <property type="nucleotide sequence ID" value="NM_123764.3"/>
</dbReference>
<dbReference type="SMR" id="Q9FNC9"/>
<dbReference type="BioGRID" id="19670">
    <property type="interactions" value="2"/>
</dbReference>
<dbReference type="FunCoup" id="Q9FNC9">
    <property type="interactions" value="2217"/>
</dbReference>
<dbReference type="IntAct" id="Q9FNC9">
    <property type="interactions" value="5"/>
</dbReference>
<dbReference type="STRING" id="3702.Q9FNC9"/>
<dbReference type="iPTMnet" id="Q9FNC9"/>
<dbReference type="PaxDb" id="3702-AT5G43970.1"/>
<dbReference type="ProteomicsDB" id="234376"/>
<dbReference type="EnsemblPlants" id="AT5G43970.1">
    <property type="protein sequence ID" value="AT5G43970.1"/>
    <property type="gene ID" value="AT5G43970"/>
</dbReference>
<dbReference type="GeneID" id="834420"/>
<dbReference type="Gramene" id="AT5G43970.1">
    <property type="protein sequence ID" value="AT5G43970.1"/>
    <property type="gene ID" value="AT5G43970"/>
</dbReference>
<dbReference type="KEGG" id="ath:AT5G43970"/>
<dbReference type="Araport" id="AT5G43970"/>
<dbReference type="TAIR" id="AT5G43970">
    <property type="gene designation" value="TOM22-V"/>
</dbReference>
<dbReference type="eggNOG" id="KOG4111">
    <property type="taxonomic scope" value="Eukaryota"/>
</dbReference>
<dbReference type="HOGENOM" id="CLU_172840_0_0_1"/>
<dbReference type="InParanoid" id="Q9FNC9"/>
<dbReference type="OMA" id="WISGTTF"/>
<dbReference type="OrthoDB" id="10016939at2759"/>
<dbReference type="PhylomeDB" id="Q9FNC9"/>
<dbReference type="PRO" id="PR:Q9FNC9"/>
<dbReference type="Proteomes" id="UP000006548">
    <property type="component" value="Chromosome 5"/>
</dbReference>
<dbReference type="ExpressionAtlas" id="Q9FNC9">
    <property type="expression patterns" value="baseline and differential"/>
</dbReference>
<dbReference type="GO" id="GO:0005742">
    <property type="term" value="C:mitochondrial outer membrane translocase complex"/>
    <property type="evidence" value="ECO:0000250"/>
    <property type="project" value="TAIR"/>
</dbReference>
<dbReference type="GO" id="GO:0005739">
    <property type="term" value="C:mitochondrion"/>
    <property type="evidence" value="ECO:0007005"/>
    <property type="project" value="TAIR"/>
</dbReference>
<dbReference type="GO" id="GO:0000325">
    <property type="term" value="C:plant-type vacuole"/>
    <property type="evidence" value="ECO:0007005"/>
    <property type="project" value="TAIR"/>
</dbReference>
<dbReference type="GO" id="GO:0009536">
    <property type="term" value="C:plastid"/>
    <property type="evidence" value="ECO:0007005"/>
    <property type="project" value="TAIR"/>
</dbReference>
<dbReference type="GO" id="GO:0015450">
    <property type="term" value="F:protein-transporting ATPase activity"/>
    <property type="evidence" value="ECO:0000250"/>
    <property type="project" value="TAIR"/>
</dbReference>
<dbReference type="GO" id="GO:0006886">
    <property type="term" value="P:intracellular protein transport"/>
    <property type="evidence" value="ECO:0007669"/>
    <property type="project" value="InterPro"/>
</dbReference>
<dbReference type="GO" id="GO:0006626">
    <property type="term" value="P:protein targeting to mitochondrion"/>
    <property type="evidence" value="ECO:0000250"/>
    <property type="project" value="TAIR"/>
</dbReference>
<dbReference type="CDD" id="cd22884">
    <property type="entry name" value="TOM22"/>
    <property type="match status" value="1"/>
</dbReference>
<dbReference type="InterPro" id="IPR005683">
    <property type="entry name" value="Tom22"/>
</dbReference>
<dbReference type="InterPro" id="IPR017411">
    <property type="entry name" value="Tom22_pln"/>
</dbReference>
<dbReference type="PANTHER" id="PTHR46867">
    <property type="entry name" value="MITOCHONDRIAL IMPORT RECEPTOR SUBUNIT TOM9-2"/>
    <property type="match status" value="1"/>
</dbReference>
<dbReference type="PANTHER" id="PTHR46867:SF4">
    <property type="entry name" value="MITOCHONDRIAL IMPORT RECEPTOR SUBUNIT TOM9-2"/>
    <property type="match status" value="1"/>
</dbReference>
<dbReference type="Pfam" id="PF04281">
    <property type="entry name" value="Tom22"/>
    <property type="match status" value="1"/>
</dbReference>
<dbReference type="PIRSF" id="PIRSF038151">
    <property type="entry name" value="TOM9-2_plant"/>
    <property type="match status" value="1"/>
</dbReference>
<feature type="initiator methionine" description="Removed" evidence="4 5">
    <location>
        <position position="1"/>
    </location>
</feature>
<feature type="chain" id="PRO_0000076110" description="Mitochondrial import receptor subunit TOM9-2">
    <location>
        <begin position="2"/>
        <end position="99"/>
    </location>
</feature>
<feature type="topological domain" description="Cytoplasmic" evidence="2">
    <location>
        <begin position="2"/>
        <end position="51"/>
    </location>
</feature>
<feature type="transmembrane region" description="Helical" evidence="2">
    <location>
        <begin position="52"/>
        <end position="69"/>
    </location>
</feature>
<feature type="topological domain" description="Mitochondrial intermembrane" evidence="2">
    <location>
        <begin position="70"/>
        <end position="99"/>
    </location>
</feature>
<comment type="function">
    <text evidence="1">Central component of the receptor complex responsible for the recognition and translocation of cytosolically synthesized mitochondrial preproteins. Together with TOM20 functions as the transit peptide receptor at the surface of the mitochondrion outer membrane and facilitates the movement of preproteins into the translocation pore (By similarity).</text>
</comment>
<comment type="subunit">
    <text evidence="5">Forms part of the preprotein translocase complex of the outer mitochondrial membrane (TOM complex) which consists of at least 6 different proteins (TOM5, TOM6, TOM7, TOM20, TOM22/TOM9 and TOM40).</text>
</comment>
<comment type="subcellular location">
    <subcellularLocation>
        <location evidence="3 5">Mitochondrion outer membrane</location>
        <topology evidence="3 5">Single-pass type II membrane protein</topology>
    </subcellularLocation>
</comment>
<comment type="tissue specificity">
    <text evidence="3">Expressed in young cotyledons, roots, flowers and leaves.</text>
</comment>
<comment type="similarity">
    <text evidence="6">Belongs to the Tom22 family.</text>
</comment>
<reference evidence="6" key="1">
    <citation type="journal article" date="1997" name="DNA Res.">
        <title>Structural analysis of Arabidopsis thaliana chromosome 5. II. Sequence features of the regions of 1,044,062 bp covered by thirteen physically assigned P1 clones.</title>
        <authorList>
            <person name="Kotani H."/>
            <person name="Nakamura Y."/>
            <person name="Sato S."/>
            <person name="Kaneko T."/>
            <person name="Asamizu E."/>
            <person name="Miyajima N."/>
            <person name="Tabata S."/>
        </authorList>
    </citation>
    <scope>NUCLEOTIDE SEQUENCE [LARGE SCALE GENOMIC DNA]</scope>
    <source>
        <strain>cv. Columbia</strain>
    </source>
</reference>
<reference evidence="6 7" key="2">
    <citation type="journal article" date="2017" name="Plant J.">
        <title>Araport11: a complete reannotation of the Arabidopsis thaliana reference genome.</title>
        <authorList>
            <person name="Cheng C.Y."/>
            <person name="Krishnakumar V."/>
            <person name="Chan A.P."/>
            <person name="Thibaud-Nissen F."/>
            <person name="Schobel S."/>
            <person name="Town C.D."/>
        </authorList>
    </citation>
    <scope>GENOME REANNOTATION</scope>
    <source>
        <strain>cv. Columbia</strain>
    </source>
</reference>
<reference key="3">
    <citation type="journal article" date="2003" name="Science">
        <title>Empirical analysis of transcriptional activity in the Arabidopsis genome.</title>
        <authorList>
            <person name="Yamada K."/>
            <person name="Lim J."/>
            <person name="Dale J.M."/>
            <person name="Chen H."/>
            <person name="Shinn P."/>
            <person name="Palm C.J."/>
            <person name="Southwick A.M."/>
            <person name="Wu H.C."/>
            <person name="Kim C.J."/>
            <person name="Nguyen M."/>
            <person name="Pham P.K."/>
            <person name="Cheuk R.F."/>
            <person name="Karlin-Newmann G."/>
            <person name="Liu S.X."/>
            <person name="Lam B."/>
            <person name="Sakano H."/>
            <person name="Wu T."/>
            <person name="Yu G."/>
            <person name="Miranda M."/>
            <person name="Quach H.L."/>
            <person name="Tripp M."/>
            <person name="Chang C.H."/>
            <person name="Lee J.M."/>
            <person name="Toriumi M.J."/>
            <person name="Chan M.M."/>
            <person name="Tang C.C."/>
            <person name="Onodera C.S."/>
            <person name="Deng J.M."/>
            <person name="Akiyama K."/>
            <person name="Ansari Y."/>
            <person name="Arakawa T."/>
            <person name="Banh J."/>
            <person name="Banno F."/>
            <person name="Bowser L."/>
            <person name="Brooks S.Y."/>
            <person name="Carninci P."/>
            <person name="Chao Q."/>
            <person name="Choy N."/>
            <person name="Enju A."/>
            <person name="Goldsmith A.D."/>
            <person name="Gurjal M."/>
            <person name="Hansen N.F."/>
            <person name="Hayashizaki Y."/>
            <person name="Johnson-Hopson C."/>
            <person name="Hsuan V.W."/>
            <person name="Iida K."/>
            <person name="Karnes M."/>
            <person name="Khan S."/>
            <person name="Koesema E."/>
            <person name="Ishida J."/>
            <person name="Jiang P.X."/>
            <person name="Jones T."/>
            <person name="Kawai J."/>
            <person name="Kamiya A."/>
            <person name="Meyers C."/>
            <person name="Nakajima M."/>
            <person name="Narusaka M."/>
            <person name="Seki M."/>
            <person name="Sakurai T."/>
            <person name="Satou M."/>
            <person name="Tamse R."/>
            <person name="Vaysberg M."/>
            <person name="Wallender E.K."/>
            <person name="Wong C."/>
            <person name="Yamamura Y."/>
            <person name="Yuan S."/>
            <person name="Shinozaki K."/>
            <person name="Davis R.W."/>
            <person name="Theologis A."/>
            <person name="Ecker J.R."/>
        </authorList>
    </citation>
    <scope>NUCLEOTIDE SEQUENCE [LARGE SCALE MRNA]</scope>
    <source>
        <strain>cv. Columbia</strain>
    </source>
</reference>
<reference evidence="6 7" key="4">
    <citation type="submission" date="2002-03" db="EMBL/GenBank/DDBJ databases">
        <title>Full-length cDNA from Arabidopsis thaliana.</title>
        <authorList>
            <person name="Brover V.V."/>
            <person name="Troukhan M.E."/>
            <person name="Alexandrov N.A."/>
            <person name="Lu Y.-P."/>
            <person name="Flavell R.B."/>
            <person name="Feldmann K.A."/>
        </authorList>
    </citation>
    <scope>NUCLEOTIDE SEQUENCE [LARGE SCALE MRNA]</scope>
</reference>
<reference evidence="6 7" key="5">
    <citation type="submission" date="2001-08" db="UniProtKB">
        <title>Characterization of the TOM22 subunit of preprotein translocase of the outer mitochondrial membrane from Arabidopsis thaliana.</title>
        <authorList>
            <person name="Werhahn W."/>
            <person name="Braun H.-P."/>
        </authorList>
    </citation>
    <scope>PROTEIN SEQUENCE OF 2-99</scope>
</reference>
<reference key="6">
    <citation type="journal article" date="2003" name="Plant Physiol. Biochem.">
        <title>Identification of novel subunits of the TOM complex from Arabidopsis thaliana.</title>
        <authorList>
            <person name="Werhahn W."/>
            <person name="Jaensch L."/>
            <person name="Braun H.-P."/>
        </authorList>
    </citation>
    <scope>PROTEIN SEQUENCE OF 2-6; 22-32 AND 74-94</scope>
    <scope>SUBUNIT</scope>
    <scope>SUBCELLULAR LOCATION</scope>
</reference>
<reference key="7">
    <citation type="journal article" date="2004" name="Plant Physiol.">
        <title>A transcriptomic and proteomic characterization of the Arabidopsis mitochondrial protein import apparatus and its response to mitochondrial dysfunction.</title>
        <authorList>
            <person name="Lister R."/>
            <person name="Chew O."/>
            <person name="Lee M.N."/>
            <person name="Heazlewood J.L."/>
            <person name="Clifton R."/>
            <person name="Parker K.L."/>
            <person name="Millar A.H."/>
            <person name="Whelan J."/>
        </authorList>
    </citation>
    <scope>TISSUE SPECIFICITY</scope>
    <scope>SUBCELLULAR LOCATION</scope>
    <scope>IDENTIFICATION BY MASS SPECTROMETRY</scope>
</reference>
<protein>
    <recommendedName>
        <fullName>Mitochondrial import receptor subunit TOM9-2</fullName>
    </recommendedName>
    <alternativeName>
        <fullName>Mitochondrial import receptor subunit TOM22 homolog 2</fullName>
    </alternativeName>
    <alternativeName>
        <fullName>Translocase of outer membrane 22 kDa subunit homolog 2</fullName>
    </alternativeName>
    <alternativeName>
        <fullName>Translocase of outer membrane 9 kDa subunit TOM9-2</fullName>
    </alternativeName>
</protein>
<keyword id="KW-0903">Direct protein sequencing</keyword>
<keyword id="KW-0472">Membrane</keyword>
<keyword id="KW-0496">Mitochondrion</keyword>
<keyword id="KW-1000">Mitochondrion outer membrane</keyword>
<keyword id="KW-0653">Protein transport</keyword>
<keyword id="KW-0675">Receptor</keyword>
<keyword id="KW-1185">Reference proteome</keyword>
<keyword id="KW-0811">Translocation</keyword>
<keyword id="KW-0812">Transmembrane</keyword>
<keyword id="KW-1133">Transmembrane helix</keyword>
<keyword id="KW-0813">Transport</keyword>
<name>TOM92_ARATH</name>